<sequence>MTNIRKTHPLTKIINNSFIDLPAPSNISAWWNFGSLLGICLIIQILTGLFLAMHYTSDTATAFSSVTHICRDVNYGWIIRYMHANGASMFFICLFLHVGRGLYYGSYMFSETWNIGIILLFAVMATAFMGYVLPWGQMSFWGATVITNLLSAIPYIGTNLVEWIWGGFSVDKATLTRFFAFHFILPFIISALAAVHLLFLHETGSNNPSGIPSDSDKIPFHPYYTIKDILGALFLILTLMLLVLFSPDLLGDPDNYIPANPLNTPPHIKPEWYFLFAYAILRSIPNKLGGVLALVFSILVLAIIPLLHTSKQRSMMFRPLSQCLFWLLVADLLTLTWIGGQPVEHPFITIGQLASILYFMILLVLMPIISIIENNMLKW</sequence>
<accession>O78934</accession>
<accession>Q34978</accession>
<feature type="chain" id="PRO_0000061220" description="Cytochrome b">
    <location>
        <begin position="1"/>
        <end position="379"/>
    </location>
</feature>
<feature type="transmembrane region" description="Helical" evidence="2">
    <location>
        <begin position="33"/>
        <end position="53"/>
    </location>
</feature>
<feature type="transmembrane region" description="Helical" evidence="2">
    <location>
        <begin position="77"/>
        <end position="98"/>
    </location>
</feature>
<feature type="transmembrane region" description="Helical" evidence="2">
    <location>
        <begin position="113"/>
        <end position="133"/>
    </location>
</feature>
<feature type="transmembrane region" description="Helical" evidence="2">
    <location>
        <begin position="178"/>
        <end position="198"/>
    </location>
</feature>
<feature type="transmembrane region" description="Helical" evidence="2">
    <location>
        <begin position="226"/>
        <end position="246"/>
    </location>
</feature>
<feature type="transmembrane region" description="Helical" evidence="2">
    <location>
        <begin position="288"/>
        <end position="308"/>
    </location>
</feature>
<feature type="transmembrane region" description="Helical" evidence="2">
    <location>
        <begin position="320"/>
        <end position="340"/>
    </location>
</feature>
<feature type="transmembrane region" description="Helical" evidence="2">
    <location>
        <begin position="347"/>
        <end position="367"/>
    </location>
</feature>
<feature type="binding site" description="axial binding residue" evidence="2">
    <location>
        <position position="83"/>
    </location>
    <ligand>
        <name>heme b</name>
        <dbReference type="ChEBI" id="CHEBI:60344"/>
        <label>b562</label>
    </ligand>
    <ligandPart>
        <name>Fe</name>
        <dbReference type="ChEBI" id="CHEBI:18248"/>
    </ligandPart>
</feature>
<feature type="binding site" description="axial binding residue" evidence="2">
    <location>
        <position position="97"/>
    </location>
    <ligand>
        <name>heme b</name>
        <dbReference type="ChEBI" id="CHEBI:60344"/>
        <label>b566</label>
    </ligand>
    <ligandPart>
        <name>Fe</name>
        <dbReference type="ChEBI" id="CHEBI:18248"/>
    </ligandPart>
</feature>
<feature type="binding site" description="axial binding residue" evidence="2">
    <location>
        <position position="182"/>
    </location>
    <ligand>
        <name>heme b</name>
        <dbReference type="ChEBI" id="CHEBI:60344"/>
        <label>b562</label>
    </ligand>
    <ligandPart>
        <name>Fe</name>
        <dbReference type="ChEBI" id="CHEBI:18248"/>
    </ligandPart>
</feature>
<feature type="binding site" description="axial binding residue" evidence="2">
    <location>
        <position position="196"/>
    </location>
    <ligand>
        <name>heme b</name>
        <dbReference type="ChEBI" id="CHEBI:60344"/>
        <label>b566</label>
    </ligand>
    <ligandPart>
        <name>Fe</name>
        <dbReference type="ChEBI" id="CHEBI:18248"/>
    </ligandPart>
</feature>
<feature type="binding site" evidence="2">
    <location>
        <position position="201"/>
    </location>
    <ligand>
        <name>a ubiquinone</name>
        <dbReference type="ChEBI" id="CHEBI:16389"/>
    </ligand>
</feature>
<feature type="sequence conflict" description="In Ref. 2; BAA05521." evidence="5" ref="2">
    <original>S</original>
    <variation>P</variation>
    <location>
        <position position="110"/>
    </location>
</feature>
<name>CYB_MUSER</name>
<dbReference type="EMBL" id="AF057127">
    <property type="protein sequence ID" value="AAC33707.1"/>
    <property type="molecule type" value="Genomic_DNA"/>
</dbReference>
<dbReference type="EMBL" id="D26515">
    <property type="protein sequence ID" value="BAA05521.1"/>
    <property type="molecule type" value="Genomic_DNA"/>
</dbReference>
<dbReference type="SMR" id="O78934"/>
<dbReference type="GO" id="GO:0005743">
    <property type="term" value="C:mitochondrial inner membrane"/>
    <property type="evidence" value="ECO:0007669"/>
    <property type="project" value="UniProtKB-SubCell"/>
</dbReference>
<dbReference type="GO" id="GO:0045275">
    <property type="term" value="C:respiratory chain complex III"/>
    <property type="evidence" value="ECO:0007669"/>
    <property type="project" value="InterPro"/>
</dbReference>
<dbReference type="GO" id="GO:0046872">
    <property type="term" value="F:metal ion binding"/>
    <property type="evidence" value="ECO:0007669"/>
    <property type="project" value="UniProtKB-KW"/>
</dbReference>
<dbReference type="GO" id="GO:0008121">
    <property type="term" value="F:ubiquinol-cytochrome-c reductase activity"/>
    <property type="evidence" value="ECO:0007669"/>
    <property type="project" value="InterPro"/>
</dbReference>
<dbReference type="GO" id="GO:0006122">
    <property type="term" value="P:mitochondrial electron transport, ubiquinol to cytochrome c"/>
    <property type="evidence" value="ECO:0007669"/>
    <property type="project" value="TreeGrafter"/>
</dbReference>
<dbReference type="CDD" id="cd00290">
    <property type="entry name" value="cytochrome_b_C"/>
    <property type="match status" value="1"/>
</dbReference>
<dbReference type="CDD" id="cd00284">
    <property type="entry name" value="Cytochrome_b_N"/>
    <property type="match status" value="1"/>
</dbReference>
<dbReference type="FunFam" id="1.20.810.10:FF:000002">
    <property type="entry name" value="Cytochrome b"/>
    <property type="match status" value="1"/>
</dbReference>
<dbReference type="Gene3D" id="1.20.810.10">
    <property type="entry name" value="Cytochrome Bc1 Complex, Chain C"/>
    <property type="match status" value="1"/>
</dbReference>
<dbReference type="InterPro" id="IPR005798">
    <property type="entry name" value="Cyt_b/b6_C"/>
</dbReference>
<dbReference type="InterPro" id="IPR036150">
    <property type="entry name" value="Cyt_b/b6_C_sf"/>
</dbReference>
<dbReference type="InterPro" id="IPR005797">
    <property type="entry name" value="Cyt_b/b6_N"/>
</dbReference>
<dbReference type="InterPro" id="IPR027387">
    <property type="entry name" value="Cytb/b6-like_sf"/>
</dbReference>
<dbReference type="InterPro" id="IPR030689">
    <property type="entry name" value="Cytochrome_b"/>
</dbReference>
<dbReference type="InterPro" id="IPR048260">
    <property type="entry name" value="Cytochrome_b_C_euk/bac"/>
</dbReference>
<dbReference type="InterPro" id="IPR048259">
    <property type="entry name" value="Cytochrome_b_N_euk/bac"/>
</dbReference>
<dbReference type="InterPro" id="IPR016174">
    <property type="entry name" value="Di-haem_cyt_TM"/>
</dbReference>
<dbReference type="PANTHER" id="PTHR19271">
    <property type="entry name" value="CYTOCHROME B"/>
    <property type="match status" value="1"/>
</dbReference>
<dbReference type="PANTHER" id="PTHR19271:SF16">
    <property type="entry name" value="CYTOCHROME B"/>
    <property type="match status" value="1"/>
</dbReference>
<dbReference type="Pfam" id="PF00032">
    <property type="entry name" value="Cytochrom_B_C"/>
    <property type="match status" value="1"/>
</dbReference>
<dbReference type="Pfam" id="PF00033">
    <property type="entry name" value="Cytochrome_B"/>
    <property type="match status" value="1"/>
</dbReference>
<dbReference type="PIRSF" id="PIRSF038885">
    <property type="entry name" value="COB"/>
    <property type="match status" value="1"/>
</dbReference>
<dbReference type="SUPFAM" id="SSF81648">
    <property type="entry name" value="a domain/subunit of cytochrome bc1 complex (Ubiquinol-cytochrome c reductase)"/>
    <property type="match status" value="1"/>
</dbReference>
<dbReference type="SUPFAM" id="SSF81342">
    <property type="entry name" value="Transmembrane di-heme cytochromes"/>
    <property type="match status" value="1"/>
</dbReference>
<dbReference type="PROSITE" id="PS51003">
    <property type="entry name" value="CYTB_CTER"/>
    <property type="match status" value="1"/>
</dbReference>
<dbReference type="PROSITE" id="PS51002">
    <property type="entry name" value="CYTB_NTER"/>
    <property type="match status" value="1"/>
</dbReference>
<organism>
    <name type="scientific">Mustela erminea</name>
    <name type="common">Ermine</name>
    <dbReference type="NCBI Taxonomy" id="36723"/>
    <lineage>
        <taxon>Eukaryota</taxon>
        <taxon>Metazoa</taxon>
        <taxon>Chordata</taxon>
        <taxon>Craniata</taxon>
        <taxon>Vertebrata</taxon>
        <taxon>Euteleostomi</taxon>
        <taxon>Mammalia</taxon>
        <taxon>Eutheria</taxon>
        <taxon>Laurasiatheria</taxon>
        <taxon>Carnivora</taxon>
        <taxon>Caniformia</taxon>
        <taxon>Musteloidea</taxon>
        <taxon>Mustelidae</taxon>
        <taxon>Mustelinae</taxon>
        <taxon>Mustela</taxon>
    </lineage>
</organism>
<evidence type="ECO:0000250" key="1"/>
<evidence type="ECO:0000250" key="2">
    <source>
        <dbReference type="UniProtKB" id="P00157"/>
    </source>
</evidence>
<evidence type="ECO:0000255" key="3">
    <source>
        <dbReference type="PROSITE-ProRule" id="PRU00967"/>
    </source>
</evidence>
<evidence type="ECO:0000255" key="4">
    <source>
        <dbReference type="PROSITE-ProRule" id="PRU00968"/>
    </source>
</evidence>
<evidence type="ECO:0000305" key="5"/>
<geneLocation type="mitochondrion"/>
<protein>
    <recommendedName>
        <fullName>Cytochrome b</fullName>
    </recommendedName>
    <alternativeName>
        <fullName>Complex III subunit 3</fullName>
    </alternativeName>
    <alternativeName>
        <fullName>Complex III subunit III</fullName>
    </alternativeName>
    <alternativeName>
        <fullName>Cytochrome b-c1 complex subunit 3</fullName>
    </alternativeName>
    <alternativeName>
        <fullName>Ubiquinol-cytochrome-c reductase complex cytochrome b subunit</fullName>
    </alternativeName>
</protein>
<comment type="function">
    <text evidence="2">Component of the ubiquinol-cytochrome c reductase complex (complex III or cytochrome b-c1 complex) that is part of the mitochondrial respiratory chain. The b-c1 complex mediates electron transfer from ubiquinol to cytochrome c. Contributes to the generation of a proton gradient across the mitochondrial membrane that is then used for ATP synthesis.</text>
</comment>
<comment type="cofactor">
    <cofactor evidence="2">
        <name>heme b</name>
        <dbReference type="ChEBI" id="CHEBI:60344"/>
    </cofactor>
    <text evidence="2">Binds 2 heme b groups non-covalently.</text>
</comment>
<comment type="subunit">
    <text evidence="2">The cytochrome bc1 complex contains 11 subunits: 3 respiratory subunits (MT-CYB, CYC1 and UQCRFS1), 2 core proteins (UQCRC1 and UQCRC2) and 6 low-molecular weight proteins (UQCRH/QCR6, UQCRB/QCR7, UQCRQ/QCR8, UQCR10/QCR9, UQCR11/QCR10 and a cleavage product of UQCRFS1). This cytochrome bc1 complex then forms a dimer.</text>
</comment>
<comment type="subcellular location">
    <subcellularLocation>
        <location evidence="2">Mitochondrion inner membrane</location>
        <topology evidence="2">Multi-pass membrane protein</topology>
    </subcellularLocation>
</comment>
<comment type="miscellaneous">
    <text evidence="1">Heme 1 (or BL or b562) is low-potential and absorbs at about 562 nm, and heme 2 (or BH or b566) is high-potential and absorbs at about 566 nm.</text>
</comment>
<comment type="similarity">
    <text evidence="3 4">Belongs to the cytochrome b family.</text>
</comment>
<comment type="caution">
    <text evidence="2">The full-length protein contains only eight transmembrane helices, not nine as predicted by bioinformatics tools.</text>
</comment>
<gene>
    <name type="primary">MT-CYB</name>
    <name type="synonym">COB</name>
    <name type="synonym">CYTB</name>
    <name type="synonym">MTCYB</name>
</gene>
<proteinExistence type="inferred from homology"/>
<keyword id="KW-0249">Electron transport</keyword>
<keyword id="KW-0349">Heme</keyword>
<keyword id="KW-0408">Iron</keyword>
<keyword id="KW-0472">Membrane</keyword>
<keyword id="KW-0479">Metal-binding</keyword>
<keyword id="KW-0496">Mitochondrion</keyword>
<keyword id="KW-0999">Mitochondrion inner membrane</keyword>
<keyword id="KW-0679">Respiratory chain</keyword>
<keyword id="KW-0812">Transmembrane</keyword>
<keyword id="KW-1133">Transmembrane helix</keyword>
<keyword id="KW-0813">Transport</keyword>
<keyword id="KW-0830">Ubiquinone</keyword>
<reference key="1">
    <citation type="journal article" date="1998" name="J. Zool. (Lond.)">
        <title>Phylogenetic relationships of otters (Carnivora: Mustelidae) based on mitochondrial cytochrome b sequences.</title>
        <authorList>
            <person name="Koepfli K.-P."/>
            <person name="Wayne R.K."/>
        </authorList>
    </citation>
    <scope>NUCLEOTIDE SEQUENCE [GENOMIC DNA]</scope>
</reference>
<reference key="2">
    <citation type="journal article" date="1994" name="Zool. Sci.">
        <title>A molecular phylogeny of the family Mustelidae (Mammalia, Carnivora), based on comparison of mitochondrial cytochrome b nucleotide sequences.</title>
        <authorList>
            <person name="Masuda R."/>
            <person name="Yoshida M.C."/>
        </authorList>
    </citation>
    <scope>NUCLEOTIDE SEQUENCE [GENOMIC DNA] OF 1-125</scope>
    <source>
        <tissue>Muscle</tissue>
    </source>
</reference>